<feature type="chain" id="PRO_0000164162" description="Putative superoxide dismutase [Cu-Zn]">
    <location>
        <begin position="1"/>
        <end position="151"/>
    </location>
</feature>
<feature type="binding site" evidence="1">
    <location>
        <position position="43"/>
    </location>
    <ligand>
        <name>Cu cation</name>
        <dbReference type="ChEBI" id="CHEBI:23378"/>
        <note>catalytic</note>
    </ligand>
</feature>
<feature type="binding site" evidence="1">
    <location>
        <position position="45"/>
    </location>
    <ligand>
        <name>Cu cation</name>
        <dbReference type="ChEBI" id="CHEBI:23378"/>
        <note>catalytic</note>
    </ligand>
</feature>
<feature type="binding site" evidence="1">
    <location>
        <position position="60"/>
    </location>
    <ligand>
        <name>Cu cation</name>
        <dbReference type="ChEBI" id="CHEBI:23378"/>
        <note>catalytic</note>
    </ligand>
</feature>
<feature type="binding site" evidence="1">
    <location>
        <position position="60"/>
    </location>
    <ligand>
        <name>Zn(2+)</name>
        <dbReference type="ChEBI" id="CHEBI:29105"/>
        <note>structural</note>
    </ligand>
</feature>
<feature type="binding site" evidence="1">
    <location>
        <position position="68"/>
    </location>
    <ligand>
        <name>Zn(2+)</name>
        <dbReference type="ChEBI" id="CHEBI:29105"/>
        <note>structural</note>
    </ligand>
</feature>
<feature type="binding site" evidence="1">
    <location>
        <position position="77"/>
    </location>
    <ligand>
        <name>Zn(2+)</name>
        <dbReference type="ChEBI" id="CHEBI:29105"/>
        <note>structural</note>
    </ligand>
</feature>
<feature type="binding site" evidence="1">
    <location>
        <position position="80"/>
    </location>
    <ligand>
        <name>Zn(2+)</name>
        <dbReference type="ChEBI" id="CHEBI:29105"/>
        <note>structural</note>
    </ligand>
</feature>
<feature type="binding site" evidence="1">
    <location>
        <position position="118"/>
    </location>
    <ligand>
        <name>Cu cation</name>
        <dbReference type="ChEBI" id="CHEBI:23378"/>
        <note>catalytic</note>
    </ligand>
</feature>
<feature type="disulfide bond" evidence="1">
    <location>
        <begin position="54"/>
        <end position="144"/>
    </location>
</feature>
<accession>P24705</accession>
<gene>
    <name type="primary">SOD</name>
</gene>
<evidence type="ECO:0000250" key="1"/>
<evidence type="ECO:0000305" key="2"/>
<protein>
    <recommendedName>
        <fullName>Putative superoxide dismutase [Cu-Zn]</fullName>
        <ecNumber>1.15.1.1</ecNumber>
    </recommendedName>
</protein>
<organismHost>
    <name type="scientific">Lepidoptera</name>
    <name type="common">butterflies and moths</name>
    <dbReference type="NCBI Taxonomy" id="7088"/>
</organismHost>
<organism>
    <name type="scientific">Autographa californica nuclear polyhedrosis virus</name>
    <name type="common">AcMNPV</name>
    <dbReference type="NCBI Taxonomy" id="46015"/>
    <lineage>
        <taxon>Viruses</taxon>
        <taxon>Viruses incertae sedis</taxon>
        <taxon>Naldaviricetes</taxon>
        <taxon>Lefavirales</taxon>
        <taxon>Baculoviridae</taxon>
        <taxon>Alphabaculovirus</taxon>
        <taxon>Alphabaculovirus aucalifornicae</taxon>
    </lineage>
</organism>
<proteinExistence type="inferred from homology"/>
<comment type="function">
    <text>Nonessential for normal virus replication. Could be either non-functional or with a low activity.</text>
</comment>
<comment type="catalytic activity">
    <reaction>
        <text>2 superoxide + 2 H(+) = H2O2 + O2</text>
        <dbReference type="Rhea" id="RHEA:20696"/>
        <dbReference type="ChEBI" id="CHEBI:15378"/>
        <dbReference type="ChEBI" id="CHEBI:15379"/>
        <dbReference type="ChEBI" id="CHEBI:16240"/>
        <dbReference type="ChEBI" id="CHEBI:18421"/>
        <dbReference type="EC" id="1.15.1.1"/>
    </reaction>
</comment>
<comment type="cofactor">
    <cofactor evidence="1">
        <name>Cu cation</name>
        <dbReference type="ChEBI" id="CHEBI:23378"/>
    </cofactor>
    <text evidence="1">Binds 1 copper ion per subunit.</text>
</comment>
<comment type="cofactor">
    <cofactor evidence="1">
        <name>Zn(2+)</name>
        <dbReference type="ChEBI" id="CHEBI:29105"/>
    </cofactor>
    <text evidence="1">Binds 1 zinc ion per subunit.</text>
</comment>
<comment type="similarity">
    <text evidence="2">Belongs to the Cu-Zn superoxide dismutase family.</text>
</comment>
<name>SODC_NPVAC</name>
<keyword id="KW-0049">Antioxidant</keyword>
<keyword id="KW-0186">Copper</keyword>
<keyword id="KW-1015">Disulfide bond</keyword>
<keyword id="KW-0426">Late protein</keyword>
<keyword id="KW-0479">Metal-binding</keyword>
<keyword id="KW-0560">Oxidoreductase</keyword>
<keyword id="KW-1185">Reference proteome</keyword>
<keyword id="KW-0862">Zinc</keyword>
<dbReference type="EC" id="1.15.1.1"/>
<dbReference type="EMBL" id="M96361">
    <property type="protein sequence ID" value="AAA66799.1"/>
    <property type="molecule type" value="Genomic_DNA"/>
</dbReference>
<dbReference type="EMBL" id="M68862">
    <property type="protein sequence ID" value="AAA46746.1"/>
    <property type="molecule type" value="Genomic_DNA"/>
</dbReference>
<dbReference type="EMBL" id="L22858">
    <property type="protein sequence ID" value="AAA66661.1"/>
    <property type="molecule type" value="Genomic_DNA"/>
</dbReference>
<dbReference type="PIR" id="A40564">
    <property type="entry name" value="DSNVAC"/>
</dbReference>
<dbReference type="SMR" id="P24705"/>
<dbReference type="KEGG" id="vg:1403863"/>
<dbReference type="OrthoDB" id="15673at10239"/>
<dbReference type="Proteomes" id="UP000008292">
    <property type="component" value="Segment"/>
</dbReference>
<dbReference type="GO" id="GO:0005507">
    <property type="term" value="F:copper ion binding"/>
    <property type="evidence" value="ECO:0007669"/>
    <property type="project" value="InterPro"/>
</dbReference>
<dbReference type="GO" id="GO:0004784">
    <property type="term" value="F:superoxide dismutase activity"/>
    <property type="evidence" value="ECO:0007669"/>
    <property type="project" value="UniProtKB-EC"/>
</dbReference>
<dbReference type="CDD" id="cd00305">
    <property type="entry name" value="Cu-Zn_Superoxide_Dismutase"/>
    <property type="match status" value="1"/>
</dbReference>
<dbReference type="FunFam" id="2.60.40.200:FF:000013">
    <property type="entry name" value="Superoxide dismutase [Cu-Zn]"/>
    <property type="match status" value="1"/>
</dbReference>
<dbReference type="Gene3D" id="2.60.40.200">
    <property type="entry name" value="Superoxide dismutase, copper/zinc binding domain"/>
    <property type="match status" value="1"/>
</dbReference>
<dbReference type="InterPro" id="IPR036423">
    <property type="entry name" value="SOD-like_Cu/Zn_dom_sf"/>
</dbReference>
<dbReference type="InterPro" id="IPR024134">
    <property type="entry name" value="SOD_Cu/Zn_/chaperone"/>
</dbReference>
<dbReference type="InterPro" id="IPR018152">
    <property type="entry name" value="SOD_Cu/Zn_BS"/>
</dbReference>
<dbReference type="InterPro" id="IPR001424">
    <property type="entry name" value="SOD_Cu_Zn_dom"/>
</dbReference>
<dbReference type="PANTHER" id="PTHR10003">
    <property type="entry name" value="SUPEROXIDE DISMUTASE CU-ZN -RELATED"/>
    <property type="match status" value="1"/>
</dbReference>
<dbReference type="Pfam" id="PF00080">
    <property type="entry name" value="Sod_Cu"/>
    <property type="match status" value="1"/>
</dbReference>
<dbReference type="PRINTS" id="PR00068">
    <property type="entry name" value="CUZNDISMTASE"/>
</dbReference>
<dbReference type="SUPFAM" id="SSF49329">
    <property type="entry name" value="Cu,Zn superoxide dismutase-like"/>
    <property type="match status" value="1"/>
</dbReference>
<dbReference type="PROSITE" id="PS00087">
    <property type="entry name" value="SOD_CU_ZN_1"/>
    <property type="match status" value="1"/>
</dbReference>
<dbReference type="PROSITE" id="PS00332">
    <property type="entry name" value="SOD_CU_ZN_2"/>
    <property type="match status" value="1"/>
</dbReference>
<reference key="1">
    <citation type="journal article" date="1991" name="Virology">
        <title>A baculovirus homolog of a Cu/Zn superoxide dismutase gene.</title>
        <authorList>
            <person name="Tomalski M.D."/>
            <person name="Eldridge R."/>
            <person name="Miller L.K."/>
        </authorList>
    </citation>
    <scope>NUCLEOTIDE SEQUENCE [GENOMIC DNA]</scope>
    <source>
        <strain>L1</strain>
    </source>
</reference>
<reference key="2">
    <citation type="journal article" date="1994" name="Virology">
        <title>The complete DNA sequence of Autographa californica nuclear polyhedrosis virus.</title>
        <authorList>
            <person name="Ayres M.D."/>
            <person name="Howard S.C."/>
            <person name="Kuzio J."/>
            <person name="Lopez-Ferber M."/>
            <person name="Possee R.D."/>
        </authorList>
    </citation>
    <scope>NUCLEOTIDE SEQUENCE [LARGE SCALE GENOMIC DNA]</scope>
    <source>
        <strain>C6</strain>
    </source>
</reference>
<sequence length="151" mass="16182">MKAICIISGDVHGKIYFQQESANQPLKISGYLLNLPRGLHGFHVHEYGDTSNGCTSAGEHFNPTNEDHGAPDAEIRHVGDLGNIKSAGYNSLTEVNMMDNVMSLYGPHNIIGRSLVVHTDKDDLGLTDHPLSKTTGNSGGRLGCGIIAICK</sequence>